<proteinExistence type="predicted"/>
<protein>
    <recommendedName>
        <fullName evidence="2">Peptide encoded by miPEP160b</fullName>
    </recommendedName>
</protein>
<sequence>MFSPQ</sequence>
<evidence type="ECO:0000269" key="1">
    <source>
    </source>
</evidence>
<evidence type="ECO:0000303" key="2">
    <source>
    </source>
</evidence>
<evidence type="ECO:0000305" key="3"/>
<evidence type="ECO:0000312" key="4">
    <source>
        <dbReference type="EMBL" id="Z97344"/>
    </source>
</evidence>
<keyword id="KW-0010">Activator</keyword>
<keyword id="KW-1185">Reference proteome</keyword>
<keyword id="KW-0804">Transcription</keyword>
<keyword id="KW-0805">Transcription regulation</keyword>
<comment type="function">
    <text evidence="1">Regulatory peptide encoded by the primary transcript (pri-miR160b) of the microRNA miR160b that enhances the accumulation of its corresponding mature miRNA. Acts probably as a transcriptional activator of its corresponding pri-miRNA.</text>
</comment>
<dbReference type="EMBL" id="Z97344">
    <property type="status" value="NOT_ANNOTATED_CDS"/>
    <property type="molecule type" value="Genomic_DNA"/>
</dbReference>
<dbReference type="EMBL" id="AL161547">
    <property type="status" value="NOT_ANNOTATED_CDS"/>
    <property type="molecule type" value="Genomic_DNA"/>
</dbReference>
<dbReference type="EMBL" id="CP002687">
    <property type="status" value="NOT_ANNOTATED_CDS"/>
    <property type="molecule type" value="Genomic_DNA"/>
</dbReference>
<dbReference type="Araport" id="AT4G17787"/>
<dbReference type="TAIR" id="AT4G17787"/>
<dbReference type="InParanoid" id="P0DKJ0"/>
<dbReference type="PRO" id="PR:P0DKJ0"/>
<dbReference type="Proteomes" id="UP000006548">
    <property type="component" value="Chromosome 4"/>
</dbReference>
<dbReference type="GO" id="GO:1902895">
    <property type="term" value="P:positive regulation of miRNA transcription"/>
    <property type="evidence" value="ECO:0000314"/>
    <property type="project" value="GO_Central"/>
</dbReference>
<organism>
    <name type="scientific">Arabidopsis thaliana</name>
    <name type="common">Mouse-ear cress</name>
    <dbReference type="NCBI Taxonomy" id="3702"/>
    <lineage>
        <taxon>Eukaryota</taxon>
        <taxon>Viridiplantae</taxon>
        <taxon>Streptophyta</taxon>
        <taxon>Embryophyta</taxon>
        <taxon>Tracheophyta</taxon>
        <taxon>Spermatophyta</taxon>
        <taxon>Magnoliopsida</taxon>
        <taxon>eudicotyledons</taxon>
        <taxon>Gunneridae</taxon>
        <taxon>Pentapetalae</taxon>
        <taxon>rosids</taxon>
        <taxon>malvids</taxon>
        <taxon>Brassicales</taxon>
        <taxon>Brassicaceae</taxon>
        <taxon>Camelineae</taxon>
        <taxon>Arabidopsis</taxon>
    </lineage>
</organism>
<reference key="1">
    <citation type="journal article" date="1998" name="Nature">
        <title>Analysis of 1.9 Mb of contiguous sequence from chromosome 4 of Arabidopsis thaliana.</title>
        <authorList>
            <person name="Bevan M."/>
            <person name="Bancroft I."/>
            <person name="Bent E."/>
            <person name="Love K."/>
            <person name="Goodman H.M."/>
            <person name="Dean C."/>
            <person name="Bergkamp R."/>
            <person name="Dirkse W."/>
            <person name="van Staveren M."/>
            <person name="Stiekema W."/>
            <person name="Drost L."/>
            <person name="Ridley P."/>
            <person name="Hudson S.-A."/>
            <person name="Patel K."/>
            <person name="Murphy G."/>
            <person name="Piffanelli P."/>
            <person name="Wedler H."/>
            <person name="Wedler E."/>
            <person name="Wambutt R."/>
            <person name="Weitzenegger T."/>
            <person name="Pohl T."/>
            <person name="Terryn N."/>
            <person name="Gielen J."/>
            <person name="Villarroel R."/>
            <person name="De Clercq R."/>
            <person name="van Montagu M."/>
            <person name="Lecharny A."/>
            <person name="Aubourg S."/>
            <person name="Gy I."/>
            <person name="Kreis M."/>
            <person name="Lao N."/>
            <person name="Kavanagh T."/>
            <person name="Hempel S."/>
            <person name="Kotter P."/>
            <person name="Entian K.-D."/>
            <person name="Rieger M."/>
            <person name="Schaefer M."/>
            <person name="Funk B."/>
            <person name="Mueller-Auer S."/>
            <person name="Silvey M."/>
            <person name="James R."/>
            <person name="Monfort A."/>
            <person name="Pons A."/>
            <person name="Puigdomenech P."/>
            <person name="Douka A."/>
            <person name="Voukelatou E."/>
            <person name="Milioni D."/>
            <person name="Hatzopoulos P."/>
            <person name="Piravandi E."/>
            <person name="Obermaier B."/>
            <person name="Hilbert H."/>
            <person name="Duesterhoeft A."/>
            <person name="Moores T."/>
            <person name="Jones J.D.G."/>
            <person name="Eneva T."/>
            <person name="Palme K."/>
            <person name="Benes V."/>
            <person name="Rechmann S."/>
            <person name="Ansorge W."/>
            <person name="Cooke R."/>
            <person name="Berger C."/>
            <person name="Delseny M."/>
            <person name="Voet M."/>
            <person name="Volckaert G."/>
            <person name="Mewes H.-W."/>
            <person name="Klosterman S."/>
            <person name="Schueller C."/>
            <person name="Chalwatzis N."/>
        </authorList>
    </citation>
    <scope>NUCLEOTIDE SEQUENCE [LARGE SCALE GENOMIC DNA]</scope>
    <source>
        <strain>cv. Columbia</strain>
    </source>
</reference>
<reference key="2">
    <citation type="journal article" date="1999" name="Nature">
        <title>Sequence and analysis of chromosome 4 of the plant Arabidopsis thaliana.</title>
        <authorList>
            <person name="Mayer K.F.X."/>
            <person name="Schueller C."/>
            <person name="Wambutt R."/>
            <person name="Murphy G."/>
            <person name="Volckaert G."/>
            <person name="Pohl T."/>
            <person name="Duesterhoeft A."/>
            <person name="Stiekema W."/>
            <person name="Entian K.-D."/>
            <person name="Terryn N."/>
            <person name="Harris B."/>
            <person name="Ansorge W."/>
            <person name="Brandt P."/>
            <person name="Grivell L.A."/>
            <person name="Rieger M."/>
            <person name="Weichselgartner M."/>
            <person name="de Simone V."/>
            <person name="Obermaier B."/>
            <person name="Mache R."/>
            <person name="Mueller M."/>
            <person name="Kreis M."/>
            <person name="Delseny M."/>
            <person name="Puigdomenech P."/>
            <person name="Watson M."/>
            <person name="Schmidtheini T."/>
            <person name="Reichert B."/>
            <person name="Portetelle D."/>
            <person name="Perez-Alonso M."/>
            <person name="Boutry M."/>
            <person name="Bancroft I."/>
            <person name="Vos P."/>
            <person name="Hoheisel J."/>
            <person name="Zimmermann W."/>
            <person name="Wedler H."/>
            <person name="Ridley P."/>
            <person name="Langham S.-A."/>
            <person name="McCullagh B."/>
            <person name="Bilham L."/>
            <person name="Robben J."/>
            <person name="van der Schueren J."/>
            <person name="Grymonprez B."/>
            <person name="Chuang Y.-J."/>
            <person name="Vandenbussche F."/>
            <person name="Braeken M."/>
            <person name="Weltjens I."/>
            <person name="Voet M."/>
            <person name="Bastiaens I."/>
            <person name="Aert R."/>
            <person name="Defoor E."/>
            <person name="Weitzenegger T."/>
            <person name="Bothe G."/>
            <person name="Ramsperger U."/>
            <person name="Hilbert H."/>
            <person name="Braun M."/>
            <person name="Holzer E."/>
            <person name="Brandt A."/>
            <person name="Peters S."/>
            <person name="van Staveren M."/>
            <person name="Dirkse W."/>
            <person name="Mooijman P."/>
            <person name="Klein Lankhorst R."/>
            <person name="Rose M."/>
            <person name="Hauf J."/>
            <person name="Koetter P."/>
            <person name="Berneiser S."/>
            <person name="Hempel S."/>
            <person name="Feldpausch M."/>
            <person name="Lamberth S."/>
            <person name="Van den Daele H."/>
            <person name="De Keyser A."/>
            <person name="Buysshaert C."/>
            <person name="Gielen J."/>
            <person name="Villarroel R."/>
            <person name="De Clercq R."/>
            <person name="van Montagu M."/>
            <person name="Rogers J."/>
            <person name="Cronin A."/>
            <person name="Quail M.A."/>
            <person name="Bray-Allen S."/>
            <person name="Clark L."/>
            <person name="Doggett J."/>
            <person name="Hall S."/>
            <person name="Kay M."/>
            <person name="Lennard N."/>
            <person name="McLay K."/>
            <person name="Mayes R."/>
            <person name="Pettett A."/>
            <person name="Rajandream M.A."/>
            <person name="Lyne M."/>
            <person name="Benes V."/>
            <person name="Rechmann S."/>
            <person name="Borkova D."/>
            <person name="Bloecker H."/>
            <person name="Scharfe M."/>
            <person name="Grimm M."/>
            <person name="Loehnert T.-H."/>
            <person name="Dose S."/>
            <person name="de Haan M."/>
            <person name="Maarse A.C."/>
            <person name="Schaefer M."/>
            <person name="Mueller-Auer S."/>
            <person name="Gabel C."/>
            <person name="Fuchs M."/>
            <person name="Fartmann B."/>
            <person name="Granderath K."/>
            <person name="Dauner D."/>
            <person name="Herzl A."/>
            <person name="Neumann S."/>
            <person name="Argiriou A."/>
            <person name="Vitale D."/>
            <person name="Liguori R."/>
            <person name="Piravandi E."/>
            <person name="Massenet O."/>
            <person name="Quigley F."/>
            <person name="Clabauld G."/>
            <person name="Muendlein A."/>
            <person name="Felber R."/>
            <person name="Schnabl S."/>
            <person name="Hiller R."/>
            <person name="Schmidt W."/>
            <person name="Lecharny A."/>
            <person name="Aubourg S."/>
            <person name="Chefdor F."/>
            <person name="Cooke R."/>
            <person name="Berger C."/>
            <person name="Monfort A."/>
            <person name="Casacuberta E."/>
            <person name="Gibbons T."/>
            <person name="Weber N."/>
            <person name="Vandenbol M."/>
            <person name="Bargues M."/>
            <person name="Terol J."/>
            <person name="Torres A."/>
            <person name="Perez-Perez A."/>
            <person name="Purnelle B."/>
            <person name="Bent E."/>
            <person name="Johnson S."/>
            <person name="Tacon D."/>
            <person name="Jesse T."/>
            <person name="Heijnen L."/>
            <person name="Schwarz S."/>
            <person name="Scholler P."/>
            <person name="Heber S."/>
            <person name="Francs P."/>
            <person name="Bielke C."/>
            <person name="Frishman D."/>
            <person name="Haase D."/>
            <person name="Lemcke K."/>
            <person name="Mewes H.-W."/>
            <person name="Stocker S."/>
            <person name="Zaccaria P."/>
            <person name="Bevan M."/>
            <person name="Wilson R.K."/>
            <person name="de la Bastide M."/>
            <person name="Habermann K."/>
            <person name="Parnell L."/>
            <person name="Dedhia N."/>
            <person name="Gnoj L."/>
            <person name="Schutz K."/>
            <person name="Huang E."/>
            <person name="Spiegel L."/>
            <person name="Sekhon M."/>
            <person name="Murray J."/>
            <person name="Sheet P."/>
            <person name="Cordes M."/>
            <person name="Abu-Threideh J."/>
            <person name="Stoneking T."/>
            <person name="Kalicki J."/>
            <person name="Graves T."/>
            <person name="Harmon G."/>
            <person name="Edwards J."/>
            <person name="Latreille P."/>
            <person name="Courtney L."/>
            <person name="Cloud J."/>
            <person name="Abbott A."/>
            <person name="Scott K."/>
            <person name="Johnson D."/>
            <person name="Minx P."/>
            <person name="Bentley D."/>
            <person name="Fulton B."/>
            <person name="Miller N."/>
            <person name="Greco T."/>
            <person name="Kemp K."/>
            <person name="Kramer J."/>
            <person name="Fulton L."/>
            <person name="Mardis E."/>
            <person name="Dante M."/>
            <person name="Pepin K."/>
            <person name="Hillier L.W."/>
            <person name="Nelson J."/>
            <person name="Spieth J."/>
            <person name="Ryan E."/>
            <person name="Andrews S."/>
            <person name="Geisel C."/>
            <person name="Layman D."/>
            <person name="Du H."/>
            <person name="Ali J."/>
            <person name="Berghoff A."/>
            <person name="Jones K."/>
            <person name="Drone K."/>
            <person name="Cotton M."/>
            <person name="Joshu C."/>
            <person name="Antonoiu B."/>
            <person name="Zidanic M."/>
            <person name="Strong C."/>
            <person name="Sun H."/>
            <person name="Lamar B."/>
            <person name="Yordan C."/>
            <person name="Ma P."/>
            <person name="Zhong J."/>
            <person name="Preston R."/>
            <person name="Vil D."/>
            <person name="Shekher M."/>
            <person name="Matero A."/>
            <person name="Shah R."/>
            <person name="Swaby I.K."/>
            <person name="O'Shaughnessy A."/>
            <person name="Rodriguez M."/>
            <person name="Hoffman J."/>
            <person name="Till S."/>
            <person name="Granat S."/>
            <person name="Shohdy N."/>
            <person name="Hasegawa A."/>
            <person name="Hameed A."/>
            <person name="Lodhi M."/>
            <person name="Johnson A."/>
            <person name="Chen E."/>
            <person name="Marra M.A."/>
            <person name="Martienssen R."/>
            <person name="McCombie W.R."/>
        </authorList>
    </citation>
    <scope>NUCLEOTIDE SEQUENCE [LARGE SCALE GENOMIC DNA]</scope>
    <source>
        <strain>cv. Columbia</strain>
    </source>
</reference>
<reference key="3">
    <citation type="journal article" date="2017" name="Plant J.">
        <title>Araport11: a complete reannotation of the Arabidopsis thaliana reference genome.</title>
        <authorList>
            <person name="Cheng C.Y."/>
            <person name="Krishnakumar V."/>
            <person name="Chan A.P."/>
            <person name="Thibaud-Nissen F."/>
            <person name="Schobel S."/>
            <person name="Town C.D."/>
        </authorList>
    </citation>
    <scope>GENOME REANNOTATION</scope>
    <source>
        <strain>cv. Columbia</strain>
    </source>
</reference>
<reference key="4">
    <citation type="journal article" date="2015" name="Nature">
        <title>Primary transcripts of microRNAs encode regulatory peptides.</title>
        <authorList>
            <person name="Lauressergues D."/>
            <person name="Couzigou J.M."/>
            <person name="Clemente H.S."/>
            <person name="Martinez Y."/>
            <person name="Dunand C."/>
            <person name="Becard G."/>
            <person name="Combier J.P."/>
        </authorList>
    </citation>
    <scope>IDENTIFICATION</scope>
    <scope>FUNCTION</scope>
    <source>
        <strain>cv. Columbia</strain>
    </source>
</reference>
<gene>
    <name evidence="2" type="primary">miPEP160b</name>
    <name evidence="3" type="ordered locus">At4g17787</name>
    <name evidence="4" type="ORF">FCAALL</name>
</gene>
<feature type="peptide" id="PRO_0000433200" description="Peptide encoded by miPEP160b">
    <location>
        <begin position="1"/>
        <end position="5"/>
    </location>
</feature>
<name>P160B_ARATH</name>
<accession>P0DKJ0</accession>